<proteinExistence type="evidence at protein level"/>
<dbReference type="EMBL" id="AF244548">
    <property type="protein sequence ID" value="AAG15313.1"/>
    <property type="molecule type" value="mRNA"/>
</dbReference>
<dbReference type="EMBL" id="U49082">
    <property type="protein sequence ID" value="AAB47236.1"/>
    <property type="molecule type" value="mRNA"/>
</dbReference>
<dbReference type="EMBL" id="CR456970">
    <property type="protein sequence ID" value="CAG33251.1"/>
    <property type="molecule type" value="mRNA"/>
</dbReference>
<dbReference type="EMBL" id="AK313461">
    <property type="protein sequence ID" value="BAG36247.1"/>
    <property type="molecule type" value="mRNA"/>
</dbReference>
<dbReference type="EMBL" id="BX537382">
    <property type="protein sequence ID" value="CAD97624.1"/>
    <property type="molecule type" value="mRNA"/>
</dbReference>
<dbReference type="EMBL" id="AC002077">
    <property type="status" value="NOT_ANNOTATED_CDS"/>
    <property type="molecule type" value="Genomic_DNA"/>
</dbReference>
<dbReference type="EMBL" id="CH471055">
    <property type="protein sequence ID" value="EAW65050.1"/>
    <property type="molecule type" value="Genomic_DNA"/>
</dbReference>
<dbReference type="EMBL" id="BC042875">
    <property type="protein sequence ID" value="AAH42875.1"/>
    <property type="molecule type" value="mRNA"/>
</dbReference>
<dbReference type="CCDS" id="CCDS74940.1"/>
<dbReference type="RefSeq" id="NP_006832.1">
    <property type="nucleotide sequence ID" value="NM_006841.6"/>
</dbReference>
<dbReference type="RefSeq" id="XP_006713017.1">
    <property type="nucleotide sequence ID" value="XM_006712954.4"/>
</dbReference>
<dbReference type="RefSeq" id="XP_054201027.1">
    <property type="nucleotide sequence ID" value="XM_054345052.1"/>
</dbReference>
<dbReference type="SMR" id="Q99624"/>
<dbReference type="BioGRID" id="116187">
    <property type="interactions" value="9"/>
</dbReference>
<dbReference type="FunCoup" id="Q99624">
    <property type="interactions" value="379"/>
</dbReference>
<dbReference type="IntAct" id="Q99624">
    <property type="interactions" value="7"/>
</dbReference>
<dbReference type="STRING" id="9606.ENSP00000481301"/>
<dbReference type="DrugBank" id="DB00174">
    <property type="generic name" value="Asparagine"/>
</dbReference>
<dbReference type="DrugBank" id="DB00117">
    <property type="generic name" value="Histidine"/>
</dbReference>
<dbReference type="DrugBank" id="DB00130">
    <property type="generic name" value="L-Glutamine"/>
</dbReference>
<dbReference type="TCDB" id="2.A.18.6.3">
    <property type="family name" value="the amino acid/auxin permease (aaap) family"/>
</dbReference>
<dbReference type="GlyCosmos" id="Q99624">
    <property type="glycosylation" value="5 sites, No reported glycans"/>
</dbReference>
<dbReference type="GlyGen" id="Q99624">
    <property type="glycosylation" value="5 sites"/>
</dbReference>
<dbReference type="iPTMnet" id="Q99624"/>
<dbReference type="PhosphoSitePlus" id="Q99624"/>
<dbReference type="BioMuta" id="SLC38A3"/>
<dbReference type="DMDM" id="52783419"/>
<dbReference type="jPOST" id="Q99624"/>
<dbReference type="MassIVE" id="Q99624"/>
<dbReference type="PaxDb" id="9606-ENSP00000481301"/>
<dbReference type="PeptideAtlas" id="Q99624"/>
<dbReference type="ProteomicsDB" id="78365"/>
<dbReference type="Antibodypedia" id="73268">
    <property type="antibodies" value="94 antibodies from 24 providers"/>
</dbReference>
<dbReference type="DNASU" id="10991"/>
<dbReference type="Ensembl" id="ENST00000614032.5">
    <property type="protein sequence ID" value="ENSP00000481301.1"/>
    <property type="gene ID" value="ENSG00000188338.15"/>
</dbReference>
<dbReference type="GeneID" id="10991"/>
<dbReference type="KEGG" id="hsa:10991"/>
<dbReference type="MANE-Select" id="ENST00000614032.5">
    <property type="protein sequence ID" value="ENSP00000481301.1"/>
    <property type="RefSeq nucleotide sequence ID" value="NM_006841.6"/>
    <property type="RefSeq protein sequence ID" value="NP_006832.1"/>
</dbReference>
<dbReference type="UCSC" id="uc032rmu.2">
    <property type="organism name" value="human"/>
</dbReference>
<dbReference type="AGR" id="HGNC:18044"/>
<dbReference type="CTD" id="10991"/>
<dbReference type="DisGeNET" id="10991"/>
<dbReference type="GeneCards" id="SLC38A3"/>
<dbReference type="HGNC" id="HGNC:18044">
    <property type="gene designation" value="SLC38A3"/>
</dbReference>
<dbReference type="HPA" id="ENSG00000188338">
    <property type="expression patterns" value="Group enriched (liver, retina)"/>
</dbReference>
<dbReference type="MalaCards" id="SLC38A3"/>
<dbReference type="MIM" id="604437">
    <property type="type" value="gene"/>
</dbReference>
<dbReference type="MIM" id="619881">
    <property type="type" value="phenotype"/>
</dbReference>
<dbReference type="neXtProt" id="NX_Q99624"/>
<dbReference type="OpenTargets" id="ENSG00000188338"/>
<dbReference type="Orphanet" id="442835">
    <property type="disease" value="Non-specific early-onset epileptic encephalopathy"/>
</dbReference>
<dbReference type="PharmGKB" id="PA38281"/>
<dbReference type="VEuPathDB" id="HostDB:ENSG00000188338"/>
<dbReference type="eggNOG" id="KOG1305">
    <property type="taxonomic scope" value="Eukaryota"/>
</dbReference>
<dbReference type="GeneTree" id="ENSGT00940000157127"/>
<dbReference type="HOGENOM" id="CLU_009020_0_2_1"/>
<dbReference type="InParanoid" id="Q99624"/>
<dbReference type="OMA" id="MEVAGEM"/>
<dbReference type="OrthoDB" id="655540at2759"/>
<dbReference type="PAN-GO" id="Q99624">
    <property type="GO annotations" value="8 GO annotations based on evolutionary models"/>
</dbReference>
<dbReference type="PhylomeDB" id="Q99624"/>
<dbReference type="PathwayCommons" id="Q99624"/>
<dbReference type="Reactome" id="R-HSA-352230">
    <property type="pathway name" value="Amino acid transport across the plasma membrane"/>
</dbReference>
<dbReference type="SignaLink" id="Q99624"/>
<dbReference type="BioGRID-ORCS" id="10991">
    <property type="hits" value="9 hits in 267 CRISPR screens"/>
</dbReference>
<dbReference type="ChiTaRS" id="SLC38A3">
    <property type="organism name" value="human"/>
</dbReference>
<dbReference type="GeneWiki" id="SLC38A3"/>
<dbReference type="GenomeRNAi" id="10991"/>
<dbReference type="Pharos" id="Q99624">
    <property type="development level" value="Tbio"/>
</dbReference>
<dbReference type="PRO" id="PR:Q99624"/>
<dbReference type="Proteomes" id="UP000005640">
    <property type="component" value="Chromosome 3"/>
</dbReference>
<dbReference type="RNAct" id="Q99624">
    <property type="molecule type" value="protein"/>
</dbReference>
<dbReference type="Bgee" id="ENSG00000188338">
    <property type="expression patterns" value="Expressed in right lobe of liver and 105 other cell types or tissues"/>
</dbReference>
<dbReference type="ExpressionAtlas" id="Q99624">
    <property type="expression patterns" value="baseline and differential"/>
</dbReference>
<dbReference type="GO" id="GO:0016324">
    <property type="term" value="C:apical plasma membrane"/>
    <property type="evidence" value="ECO:0000250"/>
    <property type="project" value="ARUK-UCL"/>
</dbReference>
<dbReference type="GO" id="GO:0016323">
    <property type="term" value="C:basolateral plasma membrane"/>
    <property type="evidence" value="ECO:0007669"/>
    <property type="project" value="UniProtKB-SubCell"/>
</dbReference>
<dbReference type="GO" id="GO:0005886">
    <property type="term" value="C:plasma membrane"/>
    <property type="evidence" value="ECO:0000314"/>
    <property type="project" value="LIFEdb"/>
</dbReference>
<dbReference type="GO" id="GO:0015171">
    <property type="term" value="F:amino acid transmembrane transporter activity"/>
    <property type="evidence" value="ECO:0000304"/>
    <property type="project" value="Reactome"/>
</dbReference>
<dbReference type="GO" id="GO:0015180">
    <property type="term" value="F:L-alanine transmembrane transporter activity"/>
    <property type="evidence" value="ECO:0000314"/>
    <property type="project" value="UniProtKB"/>
</dbReference>
<dbReference type="GO" id="GO:0015182">
    <property type="term" value="F:L-asparagine transmembrane transporter activity"/>
    <property type="evidence" value="ECO:0000314"/>
    <property type="project" value="UniProtKB"/>
</dbReference>
<dbReference type="GO" id="GO:0140831">
    <property type="term" value="F:L-asparagine, sodium:proton antiporter activity"/>
    <property type="evidence" value="ECO:0000250"/>
    <property type="project" value="UniProtKB"/>
</dbReference>
<dbReference type="GO" id="GO:0015186">
    <property type="term" value="F:L-glutamine transmembrane transporter activity"/>
    <property type="evidence" value="ECO:0000314"/>
    <property type="project" value="UniProtKB"/>
</dbReference>
<dbReference type="GO" id="GO:0140830">
    <property type="term" value="F:L-glutamine, sodium:proton antiporter activity"/>
    <property type="evidence" value="ECO:0000250"/>
    <property type="project" value="UniProtKB"/>
</dbReference>
<dbReference type="GO" id="GO:0005290">
    <property type="term" value="F:L-histidine transmembrane transporter activity"/>
    <property type="evidence" value="ECO:0000314"/>
    <property type="project" value="UniProtKB"/>
</dbReference>
<dbReference type="GO" id="GO:0140832">
    <property type="term" value="F:L-histidine, sodium:proton antiporter activity"/>
    <property type="evidence" value="ECO:0000250"/>
    <property type="project" value="UniProtKB"/>
</dbReference>
<dbReference type="GO" id="GO:0005295">
    <property type="term" value="F:neutral L-amino acid:sodium symporter activity"/>
    <property type="evidence" value="ECO:0000250"/>
    <property type="project" value="UniProtKB"/>
</dbReference>
<dbReference type="GO" id="GO:0003333">
    <property type="term" value="P:amino acid transmembrane transport"/>
    <property type="evidence" value="ECO:0000318"/>
    <property type="project" value="GO_Central"/>
</dbReference>
<dbReference type="GO" id="GO:0006865">
    <property type="term" value="P:amino acid transport"/>
    <property type="evidence" value="ECO:0000304"/>
    <property type="project" value="Reactome"/>
</dbReference>
<dbReference type="GO" id="GO:0006867">
    <property type="term" value="P:asparagine transport"/>
    <property type="evidence" value="ECO:0000314"/>
    <property type="project" value="UniProtKB"/>
</dbReference>
<dbReference type="GO" id="GO:0051365">
    <property type="term" value="P:cellular response to potassium ion starvation"/>
    <property type="evidence" value="ECO:0007669"/>
    <property type="project" value="Ensembl"/>
</dbReference>
<dbReference type="GO" id="GO:0007565">
    <property type="term" value="P:female pregnancy"/>
    <property type="evidence" value="ECO:0007669"/>
    <property type="project" value="Ensembl"/>
</dbReference>
<dbReference type="GO" id="GO:0010585">
    <property type="term" value="P:glutamine secretion"/>
    <property type="evidence" value="ECO:0000250"/>
    <property type="project" value="UniProtKB"/>
</dbReference>
<dbReference type="GO" id="GO:0006868">
    <property type="term" value="P:glutamine transport"/>
    <property type="evidence" value="ECO:0000314"/>
    <property type="project" value="UniProtKB"/>
</dbReference>
<dbReference type="GO" id="GO:0015817">
    <property type="term" value="P:histidine transport"/>
    <property type="evidence" value="ECO:0000314"/>
    <property type="project" value="UniProtKB"/>
</dbReference>
<dbReference type="GO" id="GO:0080144">
    <property type="term" value="P:intracellular amino acid homeostasis"/>
    <property type="evidence" value="ECO:0000250"/>
    <property type="project" value="UniProtKB"/>
</dbReference>
<dbReference type="GO" id="GO:0015808">
    <property type="term" value="P:L-alanine transport"/>
    <property type="evidence" value="ECO:0000314"/>
    <property type="project" value="UniProtKB"/>
</dbReference>
<dbReference type="GO" id="GO:1903811">
    <property type="term" value="P:L-asparagine import across plasma membrane"/>
    <property type="evidence" value="ECO:0000250"/>
    <property type="project" value="UniProtKB"/>
</dbReference>
<dbReference type="GO" id="GO:1903803">
    <property type="term" value="P:L-glutamine import across plasma membrane"/>
    <property type="evidence" value="ECO:0000250"/>
    <property type="project" value="UniProtKB"/>
</dbReference>
<dbReference type="GO" id="GO:1903810">
    <property type="term" value="P:L-histidine import across plasma membrane"/>
    <property type="evidence" value="ECO:0000250"/>
    <property type="project" value="UniProtKB"/>
</dbReference>
<dbReference type="GO" id="GO:1902024">
    <property type="term" value="P:L-histidine transport"/>
    <property type="evidence" value="ECO:0000250"/>
    <property type="project" value="UniProtKB"/>
</dbReference>
<dbReference type="GO" id="GO:2000487">
    <property type="term" value="P:positive regulation of glutamine transport"/>
    <property type="evidence" value="ECO:0007669"/>
    <property type="project" value="Ensembl"/>
</dbReference>
<dbReference type="GO" id="GO:0045944">
    <property type="term" value="P:positive regulation of transcription by RNA polymerase II"/>
    <property type="evidence" value="ECO:0007669"/>
    <property type="project" value="Ensembl"/>
</dbReference>
<dbReference type="GO" id="GO:0150104">
    <property type="term" value="P:transport across blood-brain barrier"/>
    <property type="evidence" value="ECO:0000303"/>
    <property type="project" value="ARUK-UCL"/>
</dbReference>
<dbReference type="InterPro" id="IPR013057">
    <property type="entry name" value="AA_transpt_TM"/>
</dbReference>
<dbReference type="PANTHER" id="PTHR22950">
    <property type="entry name" value="AMINO ACID TRANSPORTER"/>
    <property type="match status" value="1"/>
</dbReference>
<dbReference type="PANTHER" id="PTHR22950:SF22">
    <property type="entry name" value="SODIUM-COUPLED NEUTRAL AMINO ACID TRANSPORTER 3"/>
    <property type="match status" value="1"/>
</dbReference>
<dbReference type="Pfam" id="PF01490">
    <property type="entry name" value="Aa_trans"/>
    <property type="match status" value="1"/>
</dbReference>
<organism>
    <name type="scientific">Homo sapiens</name>
    <name type="common">Human</name>
    <dbReference type="NCBI Taxonomy" id="9606"/>
    <lineage>
        <taxon>Eukaryota</taxon>
        <taxon>Metazoa</taxon>
        <taxon>Chordata</taxon>
        <taxon>Craniata</taxon>
        <taxon>Vertebrata</taxon>
        <taxon>Euteleostomi</taxon>
        <taxon>Mammalia</taxon>
        <taxon>Eutheria</taxon>
        <taxon>Euarchontoglires</taxon>
        <taxon>Primates</taxon>
        <taxon>Haplorrhini</taxon>
        <taxon>Catarrhini</taxon>
        <taxon>Hominidae</taxon>
        <taxon>Homo</taxon>
    </lineage>
</organism>
<evidence type="ECO:0000250" key="1">
    <source>
        <dbReference type="UniProtKB" id="Q9DCP2"/>
    </source>
</evidence>
<evidence type="ECO:0000250" key="2">
    <source>
        <dbReference type="UniProtKB" id="Q9JHZ9"/>
    </source>
</evidence>
<evidence type="ECO:0000255" key="3"/>
<evidence type="ECO:0000255" key="4">
    <source>
        <dbReference type="PROSITE-ProRule" id="PRU00114"/>
    </source>
</evidence>
<evidence type="ECO:0000269" key="5">
    <source>
    </source>
</evidence>
<evidence type="ECO:0000269" key="6">
    <source>
    </source>
</evidence>
<evidence type="ECO:0000303" key="7">
    <source>
    </source>
</evidence>
<evidence type="ECO:0000305" key="8"/>
<evidence type="ECO:0000305" key="9">
    <source>
    </source>
</evidence>
<evidence type="ECO:0000312" key="10">
    <source>
        <dbReference type="EMBL" id="AAB47236.1"/>
    </source>
</evidence>
<evidence type="ECO:0000312" key="11">
    <source>
        <dbReference type="EMBL" id="AAG15313.1"/>
    </source>
</evidence>
<evidence type="ECO:0000312" key="12">
    <source>
        <dbReference type="EMBL" id="AAH42875.1"/>
    </source>
</evidence>
<evidence type="ECO:0000312" key="13">
    <source>
        <dbReference type="MIM" id="604437"/>
    </source>
</evidence>
<protein>
    <recommendedName>
        <fullName evidence="8">Sodium-coupled neutral amino acid transporter 3</fullName>
    </recommendedName>
    <alternativeName>
        <fullName>N-system amino acid transporter 1</fullName>
    </alternativeName>
    <alternativeName>
        <fullName>Na(+)-coupled neutral amino acid transporter 3</fullName>
    </alternativeName>
    <alternativeName>
        <fullName>Solute carrier family 38 member 3</fullName>
    </alternativeName>
    <alternativeName>
        <fullName evidence="7">System N amino acid transporter 1</fullName>
    </alternativeName>
</protein>
<sequence length="504" mass="55773">MEAPLQTEMVELVPNGKHSEGLLPVITPMAGNQRVEDPARSCMEGKSFLQKSPSKEPHFTDFEGKTSFGMSVFNLSNAIMGSGILGLAYAMANTGIILFLFLLTAVALLSSYSIHLLLKSSGVVGIRAYEQLGYRAFGTPGKLAAALAITLQNIGAMSSYLYIIKSELPLVIQTFLNLEEKTSDWYMNGNYLVILVSVTIILPLALMRQLGYLGYSSGFSLSCMVFFLIAVIYKKFHVPCPLPPNFNNTTGNFSHVEIVKEKVQLQVEPEASAFCTPSYFTLNSQTAYTIPIMAFAFVCHPEVLPIYTELKDPSKKKMQHISNLSIAVMYIMYFLAALFGYLTFYNGVESELLHTYSKVDPFDVLILCVRVAVLTAVTLTVPIVLFPVRRAIQQMLFPNQEFSWLRHVLIAVGLLTCINLLVIFAPNILGIFGVIGATSAPFLIFIFPAIFYFRIMPTEKEPARSTPKILALCFAMLGFLLMTMSLSFIIIDWASGTSRHGGNH</sequence>
<comment type="function">
    <text evidence="1 2 5">Symporter that cotransports specific neutral amino acids and sodium ions, coupled to an H(+) antiporter activity (PubMed:10823827). Mainly participates in the glutamate-GABA-glutamine cycle in brain where it transports L-glutamine from astrocytes in the intercellular space for the replenishment of both neurotransmitters glutamate and gamma-aminobutyric acid (GABA) in neurons and also functions as the major influx transporter in ganglion cells mediating the uptake of glutamine (By similarity). The transport activity is specific for L-glutamine, L-histidine and L-asparagine (PubMed:10823827). The transport is electroneutral coupled to the cotransport of 1 Na(+) and the antiport of 1 H(+) (By similarity). The transport is pH dependent, saturable, Li(+) tolerant and functions in both direction depending on the concentration gradients of its substrates and cotransported ions (PubMed:10823827). Also mediates an amino acid-gated H(+) conductance that is not stoichiometrically coupled to the amino acid transport but which influences the ionic gradients that drive the amino acid transport (By similarity). In addition, may play a role in nitrogen metabolism, amino acid homeostasis, glucose metabolism and renal ammoniagenesis (By similarity).</text>
</comment>
<comment type="catalytic activity">
    <reaction evidence="5">
        <text>L-glutamine(out) + Na(+)(out) + H(+)(in) = L-glutamine(in) + Na(+)(in) + H(+)(out)</text>
        <dbReference type="Rhea" id="RHEA:71127"/>
        <dbReference type="ChEBI" id="CHEBI:15378"/>
        <dbReference type="ChEBI" id="CHEBI:29101"/>
        <dbReference type="ChEBI" id="CHEBI:58359"/>
    </reaction>
    <physiologicalReaction direction="left-to-right" evidence="9">
        <dbReference type="Rhea" id="RHEA:71128"/>
    </physiologicalReaction>
    <physiologicalReaction direction="right-to-left" evidence="2">
        <dbReference type="Rhea" id="RHEA:71129"/>
    </physiologicalReaction>
</comment>
<comment type="catalytic activity">
    <reaction evidence="5">
        <text>L-asparagine(out) + Na(+)(out) + H(+)(in) = L-asparagine(in) + Na(+)(in) + H(+)(out)</text>
        <dbReference type="Rhea" id="RHEA:71131"/>
        <dbReference type="ChEBI" id="CHEBI:15378"/>
        <dbReference type="ChEBI" id="CHEBI:29101"/>
        <dbReference type="ChEBI" id="CHEBI:58048"/>
    </reaction>
    <physiologicalReaction direction="left-to-right" evidence="9">
        <dbReference type="Rhea" id="RHEA:71132"/>
    </physiologicalReaction>
    <physiologicalReaction direction="right-to-left" evidence="2">
        <dbReference type="Rhea" id="RHEA:71133"/>
    </physiologicalReaction>
</comment>
<comment type="catalytic activity">
    <reaction evidence="2">
        <text>L-histidine(out) + Na(+)(out) + H(+)(in) = L-histidine(in) + Na(+)(in) + H(+)(out)</text>
        <dbReference type="Rhea" id="RHEA:71135"/>
        <dbReference type="ChEBI" id="CHEBI:15378"/>
        <dbReference type="ChEBI" id="CHEBI:29101"/>
        <dbReference type="ChEBI" id="CHEBI:57595"/>
    </reaction>
    <physiologicalReaction direction="left-to-right" evidence="2">
        <dbReference type="Rhea" id="RHEA:71136"/>
    </physiologicalReaction>
    <physiologicalReaction direction="right-to-left" evidence="2">
        <dbReference type="Rhea" id="RHEA:71137"/>
    </physiologicalReaction>
</comment>
<comment type="subcellular location">
    <subcellularLocation>
        <location evidence="1">Cell membrane</location>
        <topology evidence="3">Multi-pass membrane protein</topology>
    </subcellularLocation>
    <subcellularLocation>
        <location evidence="1">Basolateral cell membrane</location>
    </subcellularLocation>
    <text evidence="1 2">The localization appears to be basolateral in the plasma membrane of hepatocytes surrounding the central vein. Localized at the cerebrospinal fluid (CSF)-facing membrane of the choroid plexus epithelial cells. In astrocytes, the localization at cell membrane is decreased by ammonia through the PKC signaling. Expressed in both luminal and abluminal plasma membranes of larger microvessels and blood brain barrier (BBB) capillaries (By similarity). Restricted to the basolateral membranes of S3 segment cells of the proximal tubules (By similarity).</text>
</comment>
<comment type="disease" evidence="6">
    <disease id="DI-06430">
        <name>Developmental and epileptic encephalopathy 102</name>
        <acronym>DEE102</acronym>
        <description>A form of epileptic encephalopathy, a heterogeneous group of early-onset epilepsies characterized by refractory seizures, neurodevelopmental impairment, and poor prognosis. Development is normal prior to seizure onset, after which cognitive and motor delays become apparent. DEE102 is an autosomal recessive form characterized by onset of variable types of seizures in infancy.</description>
        <dbReference type="MIM" id="619881"/>
    </disease>
    <text>The disease is caused by variants affecting the gene represented in this entry.</text>
</comment>
<comment type="similarity">
    <text evidence="8">Belongs to the amino acid/polyamine transporter 2 family.</text>
</comment>
<comment type="caution">
    <text evidence="2 9">PMID:10823827 shows that the transport process is electrogenic with a Na(+):L-glutamine stoichiometry of 2:1, contrary to the conclusions of Chaudhry et al (PMID:10619430) who finds that the transport is electroneutral with a Na(+):L-glutamine stoichiometry of 1:1. Chaudhry et al (PMID:11742981) shows that this electrogenic transport describes by Fei et al (PMID:10823827) would correspond to an amino acid-gated H(+) conductance that is not stoichiometrically coupled to the amino acid transport but which influences the ionic gradients that drive the amino acid transport (By similarity).</text>
</comment>
<name>S38A3_HUMAN</name>
<reference evidence="8 11" key="1">
    <citation type="journal article" date="2000" name="J. Biol. Chem.">
        <title>Primary structure, genomic organization, and functional and electrogenic characteristics of human system N 1, a Na+- and H+-coupled glutamine transporter.</title>
        <authorList>
            <person name="Fei Y.-J."/>
            <person name="Sugawara M."/>
            <person name="Nakanishi T."/>
            <person name="Huang W."/>
            <person name="Wang H."/>
            <person name="Prasad P.D."/>
            <person name="Leibach F.H."/>
            <person name="Ganapathy V."/>
        </authorList>
    </citation>
    <scope>NUCLEOTIDE SEQUENCE [MRNA]</scope>
    <scope>FUNCTION</scope>
    <source>
        <tissue evidence="11">Liver</tissue>
    </source>
</reference>
<reference evidence="8 10" key="2">
    <citation type="submission" date="1996-02" db="EMBL/GenBank/DDBJ databases">
        <authorList>
            <person name="Latif F."/>
            <person name="Lerman M."/>
            <person name="Minna J."/>
            <person name="Duh F.-M."/>
            <person name="Koonin E."/>
            <person name="Bader S."/>
        </authorList>
    </citation>
    <scope>NUCLEOTIDE SEQUENCE [MRNA]</scope>
</reference>
<reference evidence="8 10" key="3">
    <citation type="submission" date="2004-06" db="EMBL/GenBank/DDBJ databases">
        <title>Cloning of human full open reading frames in Gateway(TM) system entry vector (pDONR201).</title>
        <authorList>
            <person name="Ebert L."/>
            <person name="Schick M."/>
            <person name="Neubert P."/>
            <person name="Schatten R."/>
            <person name="Henze S."/>
            <person name="Korn B."/>
        </authorList>
    </citation>
    <scope>NUCLEOTIDE SEQUENCE [LARGE SCALE MRNA]</scope>
</reference>
<reference key="4">
    <citation type="journal article" date="2004" name="Nat. Genet.">
        <title>Complete sequencing and characterization of 21,243 full-length human cDNAs.</title>
        <authorList>
            <person name="Ota T."/>
            <person name="Suzuki Y."/>
            <person name="Nishikawa T."/>
            <person name="Otsuki T."/>
            <person name="Sugiyama T."/>
            <person name="Irie R."/>
            <person name="Wakamatsu A."/>
            <person name="Hayashi K."/>
            <person name="Sato H."/>
            <person name="Nagai K."/>
            <person name="Kimura K."/>
            <person name="Makita H."/>
            <person name="Sekine M."/>
            <person name="Obayashi M."/>
            <person name="Nishi T."/>
            <person name="Shibahara T."/>
            <person name="Tanaka T."/>
            <person name="Ishii S."/>
            <person name="Yamamoto J."/>
            <person name="Saito K."/>
            <person name="Kawai Y."/>
            <person name="Isono Y."/>
            <person name="Nakamura Y."/>
            <person name="Nagahari K."/>
            <person name="Murakami K."/>
            <person name="Yasuda T."/>
            <person name="Iwayanagi T."/>
            <person name="Wagatsuma M."/>
            <person name="Shiratori A."/>
            <person name="Sudo H."/>
            <person name="Hosoiri T."/>
            <person name="Kaku Y."/>
            <person name="Kodaira H."/>
            <person name="Kondo H."/>
            <person name="Sugawara M."/>
            <person name="Takahashi M."/>
            <person name="Kanda K."/>
            <person name="Yokoi T."/>
            <person name="Furuya T."/>
            <person name="Kikkawa E."/>
            <person name="Omura Y."/>
            <person name="Abe K."/>
            <person name="Kamihara K."/>
            <person name="Katsuta N."/>
            <person name="Sato K."/>
            <person name="Tanikawa M."/>
            <person name="Yamazaki M."/>
            <person name="Ninomiya K."/>
            <person name="Ishibashi T."/>
            <person name="Yamashita H."/>
            <person name="Murakawa K."/>
            <person name="Fujimori K."/>
            <person name="Tanai H."/>
            <person name="Kimata M."/>
            <person name="Watanabe M."/>
            <person name="Hiraoka S."/>
            <person name="Chiba Y."/>
            <person name="Ishida S."/>
            <person name="Ono Y."/>
            <person name="Takiguchi S."/>
            <person name="Watanabe S."/>
            <person name="Yosida M."/>
            <person name="Hotuta T."/>
            <person name="Kusano J."/>
            <person name="Kanehori K."/>
            <person name="Takahashi-Fujii A."/>
            <person name="Hara H."/>
            <person name="Tanase T.-O."/>
            <person name="Nomura Y."/>
            <person name="Togiya S."/>
            <person name="Komai F."/>
            <person name="Hara R."/>
            <person name="Takeuchi K."/>
            <person name="Arita M."/>
            <person name="Imose N."/>
            <person name="Musashino K."/>
            <person name="Yuuki H."/>
            <person name="Oshima A."/>
            <person name="Sasaki N."/>
            <person name="Aotsuka S."/>
            <person name="Yoshikawa Y."/>
            <person name="Matsunawa H."/>
            <person name="Ichihara T."/>
            <person name="Shiohata N."/>
            <person name="Sano S."/>
            <person name="Moriya S."/>
            <person name="Momiyama H."/>
            <person name="Satoh N."/>
            <person name="Takami S."/>
            <person name="Terashima Y."/>
            <person name="Suzuki O."/>
            <person name="Nakagawa S."/>
            <person name="Senoh A."/>
            <person name="Mizoguchi H."/>
            <person name="Goto Y."/>
            <person name="Shimizu F."/>
            <person name="Wakebe H."/>
            <person name="Hishigaki H."/>
            <person name="Watanabe T."/>
            <person name="Sugiyama A."/>
            <person name="Takemoto M."/>
            <person name="Kawakami B."/>
            <person name="Yamazaki M."/>
            <person name="Watanabe K."/>
            <person name="Kumagai A."/>
            <person name="Itakura S."/>
            <person name="Fukuzumi Y."/>
            <person name="Fujimori Y."/>
            <person name="Komiyama M."/>
            <person name="Tashiro H."/>
            <person name="Tanigami A."/>
            <person name="Fujiwara T."/>
            <person name="Ono T."/>
            <person name="Yamada K."/>
            <person name="Fujii Y."/>
            <person name="Ozaki K."/>
            <person name="Hirao M."/>
            <person name="Ohmori Y."/>
            <person name="Kawabata A."/>
            <person name="Hikiji T."/>
            <person name="Kobatake N."/>
            <person name="Inagaki H."/>
            <person name="Ikema Y."/>
            <person name="Okamoto S."/>
            <person name="Okitani R."/>
            <person name="Kawakami T."/>
            <person name="Noguchi S."/>
            <person name="Itoh T."/>
            <person name="Shigeta K."/>
            <person name="Senba T."/>
            <person name="Matsumura K."/>
            <person name="Nakajima Y."/>
            <person name="Mizuno T."/>
            <person name="Morinaga M."/>
            <person name="Sasaki M."/>
            <person name="Togashi T."/>
            <person name="Oyama M."/>
            <person name="Hata H."/>
            <person name="Watanabe M."/>
            <person name="Komatsu T."/>
            <person name="Mizushima-Sugano J."/>
            <person name="Satoh T."/>
            <person name="Shirai Y."/>
            <person name="Takahashi Y."/>
            <person name="Nakagawa K."/>
            <person name="Okumura K."/>
            <person name="Nagase T."/>
            <person name="Nomura N."/>
            <person name="Kikuchi H."/>
            <person name="Masuho Y."/>
            <person name="Yamashita R."/>
            <person name="Nakai K."/>
            <person name="Yada T."/>
            <person name="Nakamura Y."/>
            <person name="Ohara O."/>
            <person name="Isogai T."/>
            <person name="Sugano S."/>
        </authorList>
    </citation>
    <scope>NUCLEOTIDE SEQUENCE [LARGE SCALE MRNA]</scope>
    <source>
        <tissue>Corpus callosum</tissue>
    </source>
</reference>
<reference key="5">
    <citation type="journal article" date="2007" name="BMC Genomics">
        <title>The full-ORF clone resource of the German cDNA consortium.</title>
        <authorList>
            <person name="Bechtel S."/>
            <person name="Rosenfelder H."/>
            <person name="Duda A."/>
            <person name="Schmidt C.P."/>
            <person name="Ernst U."/>
            <person name="Wellenreuther R."/>
            <person name="Mehrle A."/>
            <person name="Schuster C."/>
            <person name="Bahr A."/>
            <person name="Bloecker H."/>
            <person name="Heubner D."/>
            <person name="Hoerlein A."/>
            <person name="Michel G."/>
            <person name="Wedler H."/>
            <person name="Koehrer K."/>
            <person name="Ottenwaelder B."/>
            <person name="Poustka A."/>
            <person name="Wiemann S."/>
            <person name="Schupp I."/>
        </authorList>
    </citation>
    <scope>NUCLEOTIDE SEQUENCE [LARGE SCALE MRNA]</scope>
    <source>
        <tissue>Retina</tissue>
    </source>
</reference>
<reference key="6">
    <citation type="journal article" date="2006" name="Nature">
        <title>The DNA sequence, annotation and analysis of human chromosome 3.</title>
        <authorList>
            <person name="Muzny D.M."/>
            <person name="Scherer S.E."/>
            <person name="Kaul R."/>
            <person name="Wang J."/>
            <person name="Yu J."/>
            <person name="Sudbrak R."/>
            <person name="Buhay C.J."/>
            <person name="Chen R."/>
            <person name="Cree A."/>
            <person name="Ding Y."/>
            <person name="Dugan-Rocha S."/>
            <person name="Gill R."/>
            <person name="Gunaratne P."/>
            <person name="Harris R.A."/>
            <person name="Hawes A.C."/>
            <person name="Hernandez J."/>
            <person name="Hodgson A.V."/>
            <person name="Hume J."/>
            <person name="Jackson A."/>
            <person name="Khan Z.M."/>
            <person name="Kovar-Smith C."/>
            <person name="Lewis L.R."/>
            <person name="Lozado R.J."/>
            <person name="Metzker M.L."/>
            <person name="Milosavljevic A."/>
            <person name="Miner G.R."/>
            <person name="Morgan M.B."/>
            <person name="Nazareth L.V."/>
            <person name="Scott G."/>
            <person name="Sodergren E."/>
            <person name="Song X.-Z."/>
            <person name="Steffen D."/>
            <person name="Wei S."/>
            <person name="Wheeler D.A."/>
            <person name="Wright M.W."/>
            <person name="Worley K.C."/>
            <person name="Yuan Y."/>
            <person name="Zhang Z."/>
            <person name="Adams C.Q."/>
            <person name="Ansari-Lari M.A."/>
            <person name="Ayele M."/>
            <person name="Brown M.J."/>
            <person name="Chen G."/>
            <person name="Chen Z."/>
            <person name="Clendenning J."/>
            <person name="Clerc-Blankenburg K.P."/>
            <person name="Chen R."/>
            <person name="Chen Z."/>
            <person name="Davis C."/>
            <person name="Delgado O."/>
            <person name="Dinh H.H."/>
            <person name="Dong W."/>
            <person name="Draper H."/>
            <person name="Ernst S."/>
            <person name="Fu G."/>
            <person name="Gonzalez-Garay M.L."/>
            <person name="Garcia D.K."/>
            <person name="Gillett W."/>
            <person name="Gu J."/>
            <person name="Hao B."/>
            <person name="Haugen E."/>
            <person name="Havlak P."/>
            <person name="He X."/>
            <person name="Hennig S."/>
            <person name="Hu S."/>
            <person name="Huang W."/>
            <person name="Jackson L.R."/>
            <person name="Jacob L.S."/>
            <person name="Kelly S.H."/>
            <person name="Kube M."/>
            <person name="Levy R."/>
            <person name="Li Z."/>
            <person name="Liu B."/>
            <person name="Liu J."/>
            <person name="Liu W."/>
            <person name="Lu J."/>
            <person name="Maheshwari M."/>
            <person name="Nguyen B.-V."/>
            <person name="Okwuonu G.O."/>
            <person name="Palmeiri A."/>
            <person name="Pasternak S."/>
            <person name="Perez L.M."/>
            <person name="Phelps K.A."/>
            <person name="Plopper F.J."/>
            <person name="Qiang B."/>
            <person name="Raymond C."/>
            <person name="Rodriguez R."/>
            <person name="Saenphimmachak C."/>
            <person name="Santibanez J."/>
            <person name="Shen H."/>
            <person name="Shen Y."/>
            <person name="Subramanian S."/>
            <person name="Tabor P.E."/>
            <person name="Verduzco D."/>
            <person name="Waldron L."/>
            <person name="Wang J."/>
            <person name="Wang J."/>
            <person name="Wang Q."/>
            <person name="Williams G.A."/>
            <person name="Wong G.K.-S."/>
            <person name="Yao Z."/>
            <person name="Zhang J."/>
            <person name="Zhang X."/>
            <person name="Zhao G."/>
            <person name="Zhou J."/>
            <person name="Zhou Y."/>
            <person name="Nelson D."/>
            <person name="Lehrach H."/>
            <person name="Reinhardt R."/>
            <person name="Naylor S.L."/>
            <person name="Yang H."/>
            <person name="Olson M."/>
            <person name="Weinstock G."/>
            <person name="Gibbs R.A."/>
        </authorList>
    </citation>
    <scope>NUCLEOTIDE SEQUENCE [LARGE SCALE GENOMIC DNA]</scope>
</reference>
<reference evidence="8 10" key="7">
    <citation type="submission" date="2005-07" db="EMBL/GenBank/DDBJ databases">
        <authorList>
            <person name="Mural R.J."/>
            <person name="Istrail S."/>
            <person name="Sutton G.G."/>
            <person name="Florea L."/>
            <person name="Halpern A.L."/>
            <person name="Mobarry C.M."/>
            <person name="Lippert R."/>
            <person name="Walenz B."/>
            <person name="Shatkay H."/>
            <person name="Dew I."/>
            <person name="Miller J.R."/>
            <person name="Flanigan M.J."/>
            <person name="Edwards N.J."/>
            <person name="Bolanos R."/>
            <person name="Fasulo D."/>
            <person name="Halldorsson B.V."/>
            <person name="Hannenhalli S."/>
            <person name="Turner R."/>
            <person name="Yooseph S."/>
            <person name="Lu F."/>
            <person name="Nusskern D.R."/>
            <person name="Shue B.C."/>
            <person name="Zheng X.H."/>
            <person name="Zhong F."/>
            <person name="Delcher A.L."/>
            <person name="Huson D.H."/>
            <person name="Kravitz S.A."/>
            <person name="Mouchard L."/>
            <person name="Reinert K."/>
            <person name="Remington K.A."/>
            <person name="Clark A.G."/>
            <person name="Waterman M.S."/>
            <person name="Eichler E.E."/>
            <person name="Adams M.D."/>
            <person name="Hunkapiller M.W."/>
            <person name="Myers E.W."/>
            <person name="Venter J.C."/>
        </authorList>
    </citation>
    <scope>NUCLEOTIDE SEQUENCE [LARGE SCALE GENOMIC DNA]</scope>
</reference>
<reference evidence="12" key="8">
    <citation type="journal article" date="2004" name="Genome Res.">
        <title>The status, quality, and expansion of the NIH full-length cDNA project: the Mammalian Gene Collection (MGC).</title>
        <authorList>
            <consortium name="The MGC Project Team"/>
        </authorList>
    </citation>
    <scope>NUCLEOTIDE SEQUENCE [LARGE SCALE MRNA]</scope>
    <source>
        <tissue evidence="12">Brain</tissue>
    </source>
</reference>
<reference key="9">
    <citation type="journal article" date="2014" name="J. Proteomics">
        <title>An enzyme assisted RP-RPLC approach for in-depth analysis of human liver phosphoproteome.</title>
        <authorList>
            <person name="Bian Y."/>
            <person name="Song C."/>
            <person name="Cheng K."/>
            <person name="Dong M."/>
            <person name="Wang F."/>
            <person name="Huang J."/>
            <person name="Sun D."/>
            <person name="Wang L."/>
            <person name="Ye M."/>
            <person name="Zou H."/>
        </authorList>
    </citation>
    <scope>IDENTIFICATION BY MASS SPECTROMETRY [LARGE SCALE ANALYSIS]</scope>
    <source>
        <tissue>Liver</tissue>
    </source>
</reference>
<reference key="10">
    <citation type="journal article" date="2022" name="Brain">
        <title>Biallelic variants in SLC38A3 encoding a glutamine transporter cause epileptic encephalopathy.</title>
        <authorList>
            <person name="Marafi D."/>
            <person name="Fatih J.M."/>
            <person name="Kaiyrzhanov R."/>
            <person name="Ferla M.P."/>
            <person name="Gijavanekar C."/>
            <person name="Al-Maraghi A."/>
            <person name="Liu N."/>
            <person name="Sites E."/>
            <person name="Alsaif H.S."/>
            <person name="Al-Owain M."/>
            <person name="Zakkariah M."/>
            <person name="El-Anany E."/>
            <person name="Guliyeva U."/>
            <person name="Guliyeva S."/>
            <person name="Gaba C."/>
            <person name="Haseeb A."/>
            <person name="Alhashem A.M."/>
            <person name="Danish E."/>
            <person name="Karageorgou V."/>
            <person name="Beetz C."/>
            <person name="Subhi A.A."/>
            <person name="Mullegama S.V."/>
            <person name="Torti E."/>
            <person name="Sebastin M."/>
            <person name="Breilyn M.S."/>
            <person name="Duberstein S."/>
            <person name="Abdel-Hamid M.S."/>
            <person name="Mitani T."/>
            <person name="Du H."/>
            <person name="Rosenfeld J.A."/>
            <person name="Jhangiani S.N."/>
            <person name="Coban Akdemir Z."/>
            <person name="Gibbs R.A."/>
            <person name="Taylor J.C."/>
            <person name="Fakhro K.A."/>
            <person name="Hunter J.V."/>
            <person name="Pehlivan D."/>
            <person name="Zaki M.S."/>
            <person name="Gleeson J.G."/>
            <person name="Maroofian R."/>
            <person name="Houlden H."/>
            <person name="Posey J.E."/>
            <person name="Sutton V.R."/>
            <person name="Alkuraya F.S."/>
            <person name="Elsea S.H."/>
            <person name="Lupski J.R."/>
        </authorList>
    </citation>
    <scope>VARIANTS DEE102 GLY-208; THR-296; 350-SER--HIS-504 DEL; PRO-375; GLN-387 AND 404-TRP--HIS-504 DEL</scope>
    <scope>INVOLVEMENT IN DEE102</scope>
</reference>
<gene>
    <name evidence="12 13" type="primary">SLC38A3</name>
    <name type="synonym">G17</name>
    <name type="synonym">NAT1</name>
    <name evidence="7" type="synonym">SN1</name>
    <name type="synonym">SNAT3</name>
</gene>
<feature type="chain" id="PRO_0000093828" description="Sodium-coupled neutral amino acid transporter 3">
    <location>
        <begin position="1"/>
        <end position="504"/>
    </location>
</feature>
<feature type="transmembrane region" description="Helical" evidence="3">
    <location>
        <begin position="83"/>
        <end position="103"/>
    </location>
</feature>
<feature type="transmembrane region" description="Helical" evidence="3">
    <location>
        <begin position="106"/>
        <end position="126"/>
    </location>
</feature>
<feature type="transmembrane region" description="Helical" evidence="3">
    <location>
        <begin position="144"/>
        <end position="164"/>
    </location>
</feature>
<feature type="transmembrane region" description="Helical" evidence="3">
    <location>
        <begin position="187"/>
        <end position="207"/>
    </location>
</feature>
<feature type="transmembrane region" description="Helical" evidence="3">
    <location>
        <begin position="213"/>
        <end position="233"/>
    </location>
</feature>
<feature type="transmembrane region" description="Helical" evidence="3">
    <location>
        <begin position="324"/>
        <end position="344"/>
    </location>
</feature>
<feature type="transmembrane region" description="Helical" evidence="3">
    <location>
        <begin position="366"/>
        <end position="386"/>
    </location>
</feature>
<feature type="transmembrane region" description="Helical" evidence="3">
    <location>
        <begin position="408"/>
        <end position="428"/>
    </location>
</feature>
<feature type="transmembrane region" description="Helical" evidence="3">
    <location>
        <begin position="431"/>
        <end position="451"/>
    </location>
</feature>
<feature type="transmembrane region" description="Helical" evidence="3">
    <location>
        <begin position="471"/>
        <end position="491"/>
    </location>
</feature>
<feature type="site" description="Modulates L-glutamine-induced conductances and Na(+) binding" evidence="2">
    <location>
        <position position="77"/>
    </location>
</feature>
<feature type="glycosylation site" description="N-linked (GlcNAc...) asparagine" evidence="3">
    <location>
        <position position="74"/>
    </location>
</feature>
<feature type="glycosylation site" description="N-linked (GlcNAc...) asparagine" evidence="3">
    <location>
        <position position="247"/>
    </location>
</feature>
<feature type="glycosylation site" description="N-linked (GlcNAc...) asparagine" evidence="3">
    <location>
        <position position="248"/>
    </location>
</feature>
<feature type="glycosylation site" description="N-linked (GlcNAc...) asparagine" evidence="3">
    <location>
        <position position="252"/>
    </location>
</feature>
<feature type="glycosylation site" description="N-linked (GlcNAc...) asparagine" evidence="3">
    <location>
        <position position="323"/>
    </location>
</feature>
<feature type="disulfide bond" evidence="4">
    <location>
        <begin position="240"/>
        <end position="275"/>
    </location>
</feature>
<feature type="sequence variant" id="VAR_087292" description="In DEE102; uncertain significance." evidence="6">
    <original>R</original>
    <variation>G</variation>
    <location>
        <position position="208"/>
    </location>
</feature>
<feature type="sequence variant" id="VAR_087293" description="In DEE102; uncertain significance; dbSNP:rs772451600." evidence="6">
    <original>A</original>
    <variation>T</variation>
    <location>
        <position position="296"/>
    </location>
</feature>
<feature type="sequence variant" id="VAR_087294" description="In DEE102." evidence="6">
    <location>
        <begin position="350"/>
        <end position="504"/>
    </location>
</feature>
<feature type="sequence variant" id="VAR_087295" description="In DEE102; dbSNP:rs2109158872." evidence="6">
    <original>T</original>
    <variation>P</variation>
    <location>
        <position position="375"/>
    </location>
</feature>
<feature type="sequence variant" id="VAR_087296" description="In DEE102; uncertain significance; dbSNP:rs1559756568." evidence="6">
    <original>P</original>
    <variation>Q</variation>
    <location>
        <position position="387"/>
    </location>
</feature>
<feature type="sequence variant" id="VAR_087297" description="In DEE102." evidence="6">
    <location>
        <begin position="404"/>
        <end position="504"/>
    </location>
</feature>
<feature type="sequence conflict" description="In Ref. 3; CAG33251." evidence="8" ref="3">
    <original>L</original>
    <variation>P</variation>
    <location>
        <position position="12"/>
    </location>
</feature>
<keyword id="KW-0029">Amino-acid transport</keyword>
<keyword id="KW-0050">Antiport</keyword>
<keyword id="KW-1003">Cell membrane</keyword>
<keyword id="KW-0225">Disease variant</keyword>
<keyword id="KW-1015">Disulfide bond</keyword>
<keyword id="KW-0887">Epilepsy</keyword>
<keyword id="KW-0325">Glycoprotein</keyword>
<keyword id="KW-0991">Intellectual disability</keyword>
<keyword id="KW-0406">Ion transport</keyword>
<keyword id="KW-0472">Membrane</keyword>
<keyword id="KW-1267">Proteomics identification</keyword>
<keyword id="KW-1185">Reference proteome</keyword>
<keyword id="KW-0915">Sodium</keyword>
<keyword id="KW-0739">Sodium transport</keyword>
<keyword id="KW-0769">Symport</keyword>
<keyword id="KW-0812">Transmembrane</keyword>
<keyword id="KW-1133">Transmembrane helix</keyword>
<keyword id="KW-0813">Transport</keyword>
<accession>Q99624</accession>
<accession>B2R8Q0</accession>
<accession>Q6IB34</accession>